<comment type="similarity">
    <text evidence="1">Belongs to the UPF0145 family.</text>
</comment>
<evidence type="ECO:0000255" key="1">
    <source>
        <dbReference type="HAMAP-Rule" id="MF_00338"/>
    </source>
</evidence>
<organism>
    <name type="scientific">Salmonella enteritidis PT4 (strain P125109)</name>
    <dbReference type="NCBI Taxonomy" id="550537"/>
    <lineage>
        <taxon>Bacteria</taxon>
        <taxon>Pseudomonadati</taxon>
        <taxon>Pseudomonadota</taxon>
        <taxon>Gammaproteobacteria</taxon>
        <taxon>Enterobacterales</taxon>
        <taxon>Enterobacteriaceae</taxon>
        <taxon>Salmonella</taxon>
    </lineage>
</organism>
<accession>B5QYL4</accession>
<reference key="1">
    <citation type="journal article" date="2008" name="Genome Res.">
        <title>Comparative genome analysis of Salmonella enteritidis PT4 and Salmonella gallinarum 287/91 provides insights into evolutionary and host adaptation pathways.</title>
        <authorList>
            <person name="Thomson N.R."/>
            <person name="Clayton D.J."/>
            <person name="Windhorst D."/>
            <person name="Vernikos G."/>
            <person name="Davidson S."/>
            <person name="Churcher C."/>
            <person name="Quail M.A."/>
            <person name="Stevens M."/>
            <person name="Jones M.A."/>
            <person name="Watson M."/>
            <person name="Barron A."/>
            <person name="Layton A."/>
            <person name="Pickard D."/>
            <person name="Kingsley R.A."/>
            <person name="Bignell A."/>
            <person name="Clark L."/>
            <person name="Harris B."/>
            <person name="Ormond D."/>
            <person name="Abdellah Z."/>
            <person name="Brooks K."/>
            <person name="Cherevach I."/>
            <person name="Chillingworth T."/>
            <person name="Woodward J."/>
            <person name="Norberczak H."/>
            <person name="Lord A."/>
            <person name="Arrowsmith C."/>
            <person name="Jagels K."/>
            <person name="Moule S."/>
            <person name="Mungall K."/>
            <person name="Saunders M."/>
            <person name="Whitehead S."/>
            <person name="Chabalgoity J.A."/>
            <person name="Maskell D."/>
            <person name="Humphreys T."/>
            <person name="Roberts M."/>
            <person name="Barrow P.A."/>
            <person name="Dougan G."/>
            <person name="Parkhill J."/>
        </authorList>
    </citation>
    <scope>NUCLEOTIDE SEQUENCE [LARGE SCALE GENOMIC DNA]</scope>
    <source>
        <strain>P125109</strain>
    </source>
</reference>
<feature type="chain" id="PRO_1000120011" description="UPF0145 protein YbjQ">
    <location>
        <begin position="1"/>
        <end position="107"/>
    </location>
</feature>
<gene>
    <name evidence="1" type="primary">ybjQ</name>
    <name type="ordered locus">SEN0838</name>
</gene>
<proteinExistence type="inferred from homology"/>
<protein>
    <recommendedName>
        <fullName evidence="1">UPF0145 protein YbjQ</fullName>
    </recommendedName>
</protein>
<dbReference type="EMBL" id="AM933172">
    <property type="protein sequence ID" value="CAR32421.1"/>
    <property type="molecule type" value="Genomic_DNA"/>
</dbReference>
<dbReference type="RefSeq" id="WP_001160725.1">
    <property type="nucleotide sequence ID" value="NC_011294.1"/>
</dbReference>
<dbReference type="SMR" id="B5QYL4"/>
<dbReference type="KEGG" id="set:SEN0838"/>
<dbReference type="HOGENOM" id="CLU_117144_3_0_6"/>
<dbReference type="Proteomes" id="UP000000613">
    <property type="component" value="Chromosome"/>
</dbReference>
<dbReference type="Gene3D" id="3.30.110.70">
    <property type="entry name" value="Hypothetical protein apc22750. Chain B"/>
    <property type="match status" value="1"/>
</dbReference>
<dbReference type="HAMAP" id="MF_00338">
    <property type="entry name" value="UPF0145"/>
    <property type="match status" value="1"/>
</dbReference>
<dbReference type="InterPro" id="IPR035439">
    <property type="entry name" value="UPF0145_dom_sf"/>
</dbReference>
<dbReference type="InterPro" id="IPR002765">
    <property type="entry name" value="UPF0145_YbjQ-like"/>
</dbReference>
<dbReference type="NCBIfam" id="NF002776">
    <property type="entry name" value="PRK02877.1"/>
    <property type="match status" value="1"/>
</dbReference>
<dbReference type="PANTHER" id="PTHR34068">
    <property type="entry name" value="UPF0145 PROTEIN YBJQ"/>
    <property type="match status" value="1"/>
</dbReference>
<dbReference type="PANTHER" id="PTHR34068:SF1">
    <property type="entry name" value="UPF0145 PROTEIN YBJQ"/>
    <property type="match status" value="1"/>
</dbReference>
<dbReference type="Pfam" id="PF01906">
    <property type="entry name" value="YbjQ_1"/>
    <property type="match status" value="1"/>
</dbReference>
<dbReference type="SUPFAM" id="SSF117782">
    <property type="entry name" value="YbjQ-like"/>
    <property type="match status" value="1"/>
</dbReference>
<name>YBJQ_SALEP</name>
<sequence length="107" mass="11437">MQFSTTPTLEGQSIVEYCGVVTGEAILGANIFRDFFAGIRDIVGGRSGAYEKELRKAREIAFQELGEQAKALGADAVVGIDIDYETVGKDGSMLMVSVSGTAVKTRR</sequence>